<reference key="1">
    <citation type="journal article" date="2010" name="BMC Genomics">
        <title>A genomic perspective on the potential of Actinobacillus succinogenes for industrial succinate production.</title>
        <authorList>
            <person name="McKinlay J.B."/>
            <person name="Laivenieks M."/>
            <person name="Schindler B.D."/>
            <person name="McKinlay A.A."/>
            <person name="Siddaramappa S."/>
            <person name="Challacombe J.F."/>
            <person name="Lowry S.R."/>
            <person name="Clum A."/>
            <person name="Lapidus A.L."/>
            <person name="Burkhart K.B."/>
            <person name="Harkins V."/>
            <person name="Vieille C."/>
        </authorList>
    </citation>
    <scope>NUCLEOTIDE SEQUENCE [LARGE SCALE GENOMIC DNA]</scope>
    <source>
        <strain>ATCC 55618 / DSM 22257 / CCUG 43843 / 130Z</strain>
    </source>
</reference>
<accession>A6VLK3</accession>
<organism>
    <name type="scientific">Actinobacillus succinogenes (strain ATCC 55618 / DSM 22257 / CCUG 43843 / 130Z)</name>
    <dbReference type="NCBI Taxonomy" id="339671"/>
    <lineage>
        <taxon>Bacteria</taxon>
        <taxon>Pseudomonadati</taxon>
        <taxon>Pseudomonadota</taxon>
        <taxon>Gammaproteobacteria</taxon>
        <taxon>Pasteurellales</taxon>
        <taxon>Pasteurellaceae</taxon>
        <taxon>Actinobacillus</taxon>
    </lineage>
</organism>
<feature type="chain" id="PRO_1000073399" description="Large ribosomal subunit protein uL6">
    <location>
        <begin position="1"/>
        <end position="177"/>
    </location>
</feature>
<evidence type="ECO:0000255" key="1">
    <source>
        <dbReference type="HAMAP-Rule" id="MF_01365"/>
    </source>
</evidence>
<evidence type="ECO:0000305" key="2"/>
<comment type="function">
    <text evidence="1">This protein binds to the 23S rRNA, and is important in its secondary structure. It is located near the subunit interface in the base of the L7/L12 stalk, and near the tRNA binding site of the peptidyltransferase center.</text>
</comment>
<comment type="subunit">
    <text evidence="1">Part of the 50S ribosomal subunit.</text>
</comment>
<comment type="similarity">
    <text evidence="1">Belongs to the universal ribosomal protein uL6 family.</text>
</comment>
<keyword id="KW-1185">Reference proteome</keyword>
<keyword id="KW-0687">Ribonucleoprotein</keyword>
<keyword id="KW-0689">Ribosomal protein</keyword>
<keyword id="KW-0694">RNA-binding</keyword>
<keyword id="KW-0699">rRNA-binding</keyword>
<dbReference type="EMBL" id="CP000746">
    <property type="protein sequence ID" value="ABR73850.1"/>
    <property type="molecule type" value="Genomic_DNA"/>
</dbReference>
<dbReference type="RefSeq" id="WP_012072231.1">
    <property type="nucleotide sequence ID" value="NC_009655.1"/>
</dbReference>
<dbReference type="SMR" id="A6VLK3"/>
<dbReference type="STRING" id="339671.Asuc_0474"/>
<dbReference type="KEGG" id="asu:Asuc_0474"/>
<dbReference type="eggNOG" id="COG0097">
    <property type="taxonomic scope" value="Bacteria"/>
</dbReference>
<dbReference type="HOGENOM" id="CLU_065464_1_2_6"/>
<dbReference type="OrthoDB" id="9805007at2"/>
<dbReference type="Proteomes" id="UP000001114">
    <property type="component" value="Chromosome"/>
</dbReference>
<dbReference type="GO" id="GO:0022625">
    <property type="term" value="C:cytosolic large ribosomal subunit"/>
    <property type="evidence" value="ECO:0007669"/>
    <property type="project" value="TreeGrafter"/>
</dbReference>
<dbReference type="GO" id="GO:0019843">
    <property type="term" value="F:rRNA binding"/>
    <property type="evidence" value="ECO:0007669"/>
    <property type="project" value="UniProtKB-UniRule"/>
</dbReference>
<dbReference type="GO" id="GO:0003735">
    <property type="term" value="F:structural constituent of ribosome"/>
    <property type="evidence" value="ECO:0007669"/>
    <property type="project" value="InterPro"/>
</dbReference>
<dbReference type="GO" id="GO:0002181">
    <property type="term" value="P:cytoplasmic translation"/>
    <property type="evidence" value="ECO:0007669"/>
    <property type="project" value="TreeGrafter"/>
</dbReference>
<dbReference type="FunFam" id="3.90.930.12:FF:000001">
    <property type="entry name" value="50S ribosomal protein L6"/>
    <property type="match status" value="1"/>
</dbReference>
<dbReference type="FunFam" id="3.90.930.12:FF:000002">
    <property type="entry name" value="50S ribosomal protein L6"/>
    <property type="match status" value="1"/>
</dbReference>
<dbReference type="Gene3D" id="3.90.930.12">
    <property type="entry name" value="Ribosomal protein L6, alpha-beta domain"/>
    <property type="match status" value="2"/>
</dbReference>
<dbReference type="HAMAP" id="MF_01365_B">
    <property type="entry name" value="Ribosomal_uL6_B"/>
    <property type="match status" value="1"/>
</dbReference>
<dbReference type="InterPro" id="IPR000702">
    <property type="entry name" value="Ribosomal_uL6-like"/>
</dbReference>
<dbReference type="InterPro" id="IPR036789">
    <property type="entry name" value="Ribosomal_uL6-like_a/b-dom_sf"/>
</dbReference>
<dbReference type="InterPro" id="IPR020040">
    <property type="entry name" value="Ribosomal_uL6_a/b-dom"/>
</dbReference>
<dbReference type="InterPro" id="IPR019906">
    <property type="entry name" value="Ribosomal_uL6_bac-type"/>
</dbReference>
<dbReference type="InterPro" id="IPR002358">
    <property type="entry name" value="Ribosomal_uL6_CS"/>
</dbReference>
<dbReference type="NCBIfam" id="TIGR03654">
    <property type="entry name" value="L6_bact"/>
    <property type="match status" value="1"/>
</dbReference>
<dbReference type="PANTHER" id="PTHR11655">
    <property type="entry name" value="60S/50S RIBOSOMAL PROTEIN L6/L9"/>
    <property type="match status" value="1"/>
</dbReference>
<dbReference type="PANTHER" id="PTHR11655:SF14">
    <property type="entry name" value="LARGE RIBOSOMAL SUBUNIT PROTEIN UL6M"/>
    <property type="match status" value="1"/>
</dbReference>
<dbReference type="Pfam" id="PF00347">
    <property type="entry name" value="Ribosomal_L6"/>
    <property type="match status" value="2"/>
</dbReference>
<dbReference type="PIRSF" id="PIRSF002162">
    <property type="entry name" value="Ribosomal_L6"/>
    <property type="match status" value="1"/>
</dbReference>
<dbReference type="PRINTS" id="PR00059">
    <property type="entry name" value="RIBOSOMALL6"/>
</dbReference>
<dbReference type="SUPFAM" id="SSF56053">
    <property type="entry name" value="Ribosomal protein L6"/>
    <property type="match status" value="2"/>
</dbReference>
<dbReference type="PROSITE" id="PS00525">
    <property type="entry name" value="RIBOSOMAL_L6_1"/>
    <property type="match status" value="1"/>
</dbReference>
<gene>
    <name evidence="1" type="primary">rplF</name>
    <name type="ordered locus">Asuc_0474</name>
</gene>
<sequence>MSRVAKAPVNIPAGVQVSLNGQLLTVKGKNSELSRTIHNSVEVKEDNGALTFAPREGFAGADAQAGTARALVNAMVIGVTEGFTKKLQLVGVGYRAQVKGNSISLNLGFSHPVEHTLPAGITAECPSQTEIVLKGADKQLIGQVAADIRAYRKPEPYKGKGVRYADEVVRTKEAKKK</sequence>
<proteinExistence type="inferred from homology"/>
<protein>
    <recommendedName>
        <fullName evidence="1">Large ribosomal subunit protein uL6</fullName>
    </recommendedName>
    <alternativeName>
        <fullName evidence="2">50S ribosomal protein L6</fullName>
    </alternativeName>
</protein>
<name>RL6_ACTSZ</name>